<comment type="function">
    <text>Cadherins are calcium-dependent cell adhesion proteins. They preferentially interact with themselves in a homophilic manner in connecting cells; cadherins may thus contribute to the sorting of heterogeneous cell types. PB-cadherins may have a role in the morphological organization of pituitary gland and brain tissues.</text>
</comment>
<comment type="subcellular location">
    <subcellularLocation>
        <location>Cell membrane</location>
        <topology>Single-pass type I membrane protein</topology>
    </subcellularLocation>
</comment>
<comment type="alternative products">
    <event type="alternative splicing"/>
    <isoform>
        <id>Q63315-1</id>
        <name>1</name>
        <sequence type="displayed"/>
    </isoform>
    <isoform>
        <id>Q63315-2</id>
        <name>2</name>
        <sequence type="described" ref="VSP_000643 VSP_000644"/>
    </isoform>
</comment>
<comment type="tissue specificity">
    <text>Strongly expressed in the pituitary gland and the brain (in the inner granular and glomerular layers of the olfactory bulb, anterior olfactory nucleus, primary olfactory cortex, Purkinje cell layer of cerebellum, and pineal gland). Low expression in lung and heart. No expression in submandibular gland, thymus, liver, spleen, adrenal, and kidney.</text>
</comment>
<comment type="developmental stage">
    <text>Expressed strongly in fetal brain.</text>
</comment>
<comment type="domain">
    <text evidence="1">Three calcium ions are usually bound at the interface of each cadherin domain and rigidify the connections, imparting a strong curvature to the full-length ectodomain.</text>
</comment>
<name>CAD22_RAT</name>
<dbReference type="EMBL" id="D83348">
    <property type="protein sequence ID" value="BAA11894.1"/>
    <property type="molecule type" value="mRNA"/>
</dbReference>
<dbReference type="EMBL" id="D83349">
    <property type="protein sequence ID" value="BAA11895.1"/>
    <property type="molecule type" value="mRNA"/>
</dbReference>
<dbReference type="RefSeq" id="NP_062034.2">
    <molecule id="Q63315-1"/>
    <property type="nucleotide sequence ID" value="NM_019161.3"/>
</dbReference>
<dbReference type="RefSeq" id="XP_038960352.1">
    <molecule id="Q63315-1"/>
    <property type="nucleotide sequence ID" value="XM_039104424.2"/>
</dbReference>
<dbReference type="SMR" id="Q63315"/>
<dbReference type="FunCoup" id="Q63315">
    <property type="interactions" value="1012"/>
</dbReference>
<dbReference type="STRING" id="10116.ENSRNOP00000025150"/>
<dbReference type="GlyCosmos" id="Q63315">
    <property type="glycosylation" value="3 sites, No reported glycans"/>
</dbReference>
<dbReference type="GlyGen" id="Q63315">
    <property type="glycosylation" value="3 sites"/>
</dbReference>
<dbReference type="PhosphoSitePlus" id="Q63315"/>
<dbReference type="PaxDb" id="10116-ENSRNOP00000025150"/>
<dbReference type="Ensembl" id="ENSRNOT00000025150.7">
    <molecule id="Q63315-1"/>
    <property type="protein sequence ID" value="ENSRNOP00000025150.5"/>
    <property type="gene ID" value="ENSRNOG00000018557.7"/>
</dbReference>
<dbReference type="GeneID" id="29182"/>
<dbReference type="KEGG" id="rno:29182"/>
<dbReference type="UCSC" id="RGD:2321">
    <molecule id="Q63315-1"/>
    <property type="organism name" value="rat"/>
</dbReference>
<dbReference type="AGR" id="RGD:2321"/>
<dbReference type="CTD" id="64405"/>
<dbReference type="RGD" id="2321">
    <property type="gene designation" value="Cdh22"/>
</dbReference>
<dbReference type="eggNOG" id="KOG3594">
    <property type="taxonomic scope" value="Eukaryota"/>
</dbReference>
<dbReference type="GeneTree" id="ENSGT00940000159376"/>
<dbReference type="HOGENOM" id="CLU_005284_3_1_1"/>
<dbReference type="InParanoid" id="Q63315"/>
<dbReference type="OMA" id="GAWAMHT"/>
<dbReference type="OrthoDB" id="6252479at2759"/>
<dbReference type="PhylomeDB" id="Q63315"/>
<dbReference type="PRO" id="PR:Q63315"/>
<dbReference type="Proteomes" id="UP000002494">
    <property type="component" value="Chromosome 3"/>
</dbReference>
<dbReference type="Bgee" id="ENSRNOG00000018557">
    <property type="expression patterns" value="Expressed in frontal cortex and 7 other cell types or tissues"/>
</dbReference>
<dbReference type="GO" id="GO:0005912">
    <property type="term" value="C:adherens junction"/>
    <property type="evidence" value="ECO:0000318"/>
    <property type="project" value="GO_Central"/>
</dbReference>
<dbReference type="GO" id="GO:0016342">
    <property type="term" value="C:catenin complex"/>
    <property type="evidence" value="ECO:0000318"/>
    <property type="project" value="GO_Central"/>
</dbReference>
<dbReference type="GO" id="GO:0008013">
    <property type="term" value="F:beta-catenin binding"/>
    <property type="evidence" value="ECO:0000318"/>
    <property type="project" value="GO_Central"/>
</dbReference>
<dbReference type="GO" id="GO:0045296">
    <property type="term" value="F:cadherin binding"/>
    <property type="evidence" value="ECO:0000318"/>
    <property type="project" value="GO_Central"/>
</dbReference>
<dbReference type="GO" id="GO:0005509">
    <property type="term" value="F:calcium ion binding"/>
    <property type="evidence" value="ECO:0007669"/>
    <property type="project" value="InterPro"/>
</dbReference>
<dbReference type="GO" id="GO:0034332">
    <property type="term" value="P:adherens junction organization"/>
    <property type="evidence" value="ECO:0000318"/>
    <property type="project" value="GO_Central"/>
</dbReference>
<dbReference type="GO" id="GO:0016339">
    <property type="term" value="P:calcium-dependent cell-cell adhesion via plasma membrane cell adhesion molecules"/>
    <property type="evidence" value="ECO:0000314"/>
    <property type="project" value="RGD"/>
</dbReference>
<dbReference type="GO" id="GO:0016477">
    <property type="term" value="P:cell migration"/>
    <property type="evidence" value="ECO:0000318"/>
    <property type="project" value="GO_Central"/>
</dbReference>
<dbReference type="GO" id="GO:0000902">
    <property type="term" value="P:cell morphogenesis"/>
    <property type="evidence" value="ECO:0000318"/>
    <property type="project" value="GO_Central"/>
</dbReference>
<dbReference type="GO" id="GO:0044331">
    <property type="term" value="P:cell-cell adhesion mediated by cadherin"/>
    <property type="evidence" value="ECO:0000318"/>
    <property type="project" value="GO_Central"/>
</dbReference>
<dbReference type="GO" id="GO:0007043">
    <property type="term" value="P:cell-cell junction assembly"/>
    <property type="evidence" value="ECO:0000318"/>
    <property type="project" value="GO_Central"/>
</dbReference>
<dbReference type="GO" id="GO:0007156">
    <property type="term" value="P:homophilic cell adhesion via plasma membrane adhesion molecules"/>
    <property type="evidence" value="ECO:0007669"/>
    <property type="project" value="InterPro"/>
</dbReference>
<dbReference type="CDD" id="cd11304">
    <property type="entry name" value="Cadherin_repeat"/>
    <property type="match status" value="5"/>
</dbReference>
<dbReference type="FunFam" id="4.10.900.10:FF:000007">
    <property type="entry name" value="Cadherin 22"/>
    <property type="match status" value="1"/>
</dbReference>
<dbReference type="FunFam" id="2.60.40.60:FF:000008">
    <property type="entry name" value="Cadherin 24"/>
    <property type="match status" value="1"/>
</dbReference>
<dbReference type="FunFam" id="2.60.40.60:FF:000009">
    <property type="entry name" value="Cadherin 24"/>
    <property type="match status" value="1"/>
</dbReference>
<dbReference type="FunFam" id="2.60.40.60:FF:000012">
    <property type="entry name" value="Cadherin 24"/>
    <property type="match status" value="1"/>
</dbReference>
<dbReference type="FunFam" id="2.60.40.60:FF:000017">
    <property type="entry name" value="Cadherin 24"/>
    <property type="match status" value="1"/>
</dbReference>
<dbReference type="FunFam" id="2.60.40.60:FF:000014">
    <property type="entry name" value="Cadherin 8"/>
    <property type="match status" value="1"/>
</dbReference>
<dbReference type="Gene3D" id="2.60.40.60">
    <property type="entry name" value="Cadherins"/>
    <property type="match status" value="5"/>
</dbReference>
<dbReference type="Gene3D" id="4.10.900.10">
    <property type="entry name" value="TCF3-CBD (Catenin binding domain)"/>
    <property type="match status" value="1"/>
</dbReference>
<dbReference type="InterPro" id="IPR039808">
    <property type="entry name" value="Cadherin"/>
</dbReference>
<dbReference type="InterPro" id="IPR002126">
    <property type="entry name" value="Cadherin-like_dom"/>
</dbReference>
<dbReference type="InterPro" id="IPR015919">
    <property type="entry name" value="Cadherin-like_sf"/>
</dbReference>
<dbReference type="InterPro" id="IPR020894">
    <property type="entry name" value="Cadherin_CS"/>
</dbReference>
<dbReference type="InterPro" id="IPR000233">
    <property type="entry name" value="Cadherin_Y-type_LIR"/>
</dbReference>
<dbReference type="InterPro" id="IPR027397">
    <property type="entry name" value="Catenin-bd_sf"/>
</dbReference>
<dbReference type="PANTHER" id="PTHR24027:SF311">
    <property type="entry name" value="CADHERIN-22"/>
    <property type="match status" value="1"/>
</dbReference>
<dbReference type="PANTHER" id="PTHR24027">
    <property type="entry name" value="CADHERIN-23"/>
    <property type="match status" value="1"/>
</dbReference>
<dbReference type="Pfam" id="PF01049">
    <property type="entry name" value="CADH_Y-type_LIR"/>
    <property type="match status" value="1"/>
</dbReference>
<dbReference type="Pfam" id="PF00028">
    <property type="entry name" value="Cadherin"/>
    <property type="match status" value="5"/>
</dbReference>
<dbReference type="PRINTS" id="PR00205">
    <property type="entry name" value="CADHERIN"/>
</dbReference>
<dbReference type="SMART" id="SM00112">
    <property type="entry name" value="CA"/>
    <property type="match status" value="5"/>
</dbReference>
<dbReference type="SUPFAM" id="SSF49313">
    <property type="entry name" value="Cadherin-like"/>
    <property type="match status" value="5"/>
</dbReference>
<dbReference type="PROSITE" id="PS00232">
    <property type="entry name" value="CADHERIN_1"/>
    <property type="match status" value="2"/>
</dbReference>
<dbReference type="PROSITE" id="PS50268">
    <property type="entry name" value="CADHERIN_2"/>
    <property type="match status" value="5"/>
</dbReference>
<feature type="signal peptide" evidence="2">
    <location>
        <begin position="1"/>
        <end position="33"/>
    </location>
</feature>
<feature type="chain" id="PRO_0000003823" description="Cadherin-22">
    <location>
        <begin position="34"/>
        <end position="813"/>
    </location>
</feature>
<feature type="topological domain" description="Extracellular" evidence="2">
    <location>
        <begin position="34"/>
        <end position="621"/>
    </location>
</feature>
<feature type="transmembrane region" description="Helical" evidence="2">
    <location>
        <begin position="622"/>
        <end position="642"/>
    </location>
</feature>
<feature type="topological domain" description="Cytoplasmic" evidence="2">
    <location>
        <begin position="643"/>
        <end position="813"/>
    </location>
</feature>
<feature type="domain" description="Cadherin 1" evidence="3">
    <location>
        <begin position="61"/>
        <end position="165"/>
    </location>
</feature>
<feature type="domain" description="Cadherin 2" evidence="3">
    <location>
        <begin position="166"/>
        <end position="274"/>
    </location>
</feature>
<feature type="domain" description="Cadherin 3" evidence="3">
    <location>
        <begin position="275"/>
        <end position="391"/>
    </location>
</feature>
<feature type="domain" description="Cadherin 4" evidence="3">
    <location>
        <begin position="392"/>
        <end position="495"/>
    </location>
</feature>
<feature type="domain" description="Cadherin 5" evidence="3">
    <location>
        <begin position="496"/>
        <end position="613"/>
    </location>
</feature>
<feature type="region of interest" description="Disordered" evidence="4">
    <location>
        <begin position="696"/>
        <end position="726"/>
    </location>
</feature>
<feature type="glycosylation site" description="N-linked (GlcNAc...) asparagine" evidence="2">
    <location>
        <position position="159"/>
    </location>
</feature>
<feature type="glycosylation site" description="N-linked (GlcNAc...) asparagine" evidence="2">
    <location>
        <position position="463"/>
    </location>
</feature>
<feature type="glycosylation site" description="N-linked (GlcNAc...) asparagine" evidence="2">
    <location>
        <position position="609"/>
    </location>
</feature>
<feature type="splice variant" id="VSP_000643" description="In isoform 2." evidence="5">
    <original>NDEGGGEQDTEAYDMSALRSLYDFGEL</original>
    <variation>TLGSGHRGTSNKEDHQCPASLSLGFKP</variation>
    <location>
        <begin position="668"/>
        <end position="694"/>
    </location>
</feature>
<feature type="splice variant" id="VSP_000644" description="In isoform 2." evidence="5">
    <location>
        <begin position="695"/>
        <end position="813"/>
    </location>
</feature>
<protein>
    <recommendedName>
        <fullName>Cadherin-22</fullName>
    </recommendedName>
    <alternativeName>
        <fullName>Pituitary and brain cadherin</fullName>
        <shortName>PB-cadherin</shortName>
    </alternativeName>
</protein>
<keyword id="KW-0025">Alternative splicing</keyword>
<keyword id="KW-0106">Calcium</keyword>
<keyword id="KW-0130">Cell adhesion</keyword>
<keyword id="KW-1003">Cell membrane</keyword>
<keyword id="KW-0325">Glycoprotein</keyword>
<keyword id="KW-0472">Membrane</keyword>
<keyword id="KW-0479">Metal-binding</keyword>
<keyword id="KW-1185">Reference proteome</keyword>
<keyword id="KW-0677">Repeat</keyword>
<keyword id="KW-0732">Signal</keyword>
<keyword id="KW-0812">Transmembrane</keyword>
<keyword id="KW-1133">Transmembrane helix</keyword>
<sequence length="813" mass="87979">MRPRPAGALRAGAALSPVLLLLLLLQLLGHLWAASTPAPSSLSPGTQQDNQLGAGRVKRGWVWNQFFVVEEYTGTEPLYVGKIHSDSDEGDGTIKYTISGEGAGTIFLIDELTGDIHATERLDREQKTFYTLRAQARDRATNRLLEPESEFIIKVQDINDSEPRFLHGPYIGSVAELSPTGTSVMQVMASDADDPTYGSSARLVYSVLDGEHHFTVDPKTGVIRTAVPDLDRESQERYEVVIQATDMAGQLGGLSGSTTVTIVVTDVNDNPPRFPQKMYQFSIQESAPIGTAVGRVKAEDSDVGENTDMTYHLREESGSGGDAFKVTTDSDTQEAIIVVQKHLDFESQQVHTVVLEALNKFVDPRFADLGTFRDQAIVRVAVTDVDEPPEFRPPSGLLEVQEDAQVGSLVGVVTARDPDAANRPVRYAIDRDSDLEQIFDIDADTGAIVTGKGLDRETAGWHNITVLAMEADNHAQLSRASLRIRILDVNDNPPELATPYEAAVCEDAKPGQLIQTISVVDRDEPQGGHRFYFRLVPEEPSNPHFSLLDIEDNTAAVHTQHVGFNRQEQDVFLLPILVVDSGPPTLSSTGTLTIRICGCDSSGTIQSCNTTAFVMAASLSPGALIALLVCVLILVVLALLILTLRRHHKSHLSSDVDEDMRDNVIKYNDEGGGEQDTEAYDMSALRSLYDFGELKGGDPGGGAASPPQAASSSERHSLPRGPSSPEPDFSVFRDFISRKVALADADLSVPPYDAFQTYAFEGAGSPAASLSSLHSGSTGSEQDFAFLRAWGPRFRPLAALYAGHRGDDEAPAS</sequence>
<organism>
    <name type="scientific">Rattus norvegicus</name>
    <name type="common">Rat</name>
    <dbReference type="NCBI Taxonomy" id="10116"/>
    <lineage>
        <taxon>Eukaryota</taxon>
        <taxon>Metazoa</taxon>
        <taxon>Chordata</taxon>
        <taxon>Craniata</taxon>
        <taxon>Vertebrata</taxon>
        <taxon>Euteleostomi</taxon>
        <taxon>Mammalia</taxon>
        <taxon>Eutheria</taxon>
        <taxon>Euarchontoglires</taxon>
        <taxon>Glires</taxon>
        <taxon>Rodentia</taxon>
        <taxon>Myomorpha</taxon>
        <taxon>Muroidea</taxon>
        <taxon>Muridae</taxon>
        <taxon>Murinae</taxon>
        <taxon>Rattus</taxon>
    </lineage>
</organism>
<reference key="1">
    <citation type="journal article" date="1996" name="J. Biol. Chem.">
        <title>Molecular cloning and characterization of a newly identified member of the cadherin family, PB-cadherin.</title>
        <authorList>
            <person name="Sugimoto K."/>
            <person name="Honda S."/>
            <person name="Yamamoto T."/>
            <person name="Ueki T."/>
            <person name="Monden M."/>
            <person name="Kaji A."/>
            <person name="Matsumoto K."/>
            <person name="Nakamura T."/>
        </authorList>
    </citation>
    <scope>NUCLEOTIDE SEQUENCE [MRNA] (ISOFORMS 1 AND 2)</scope>
    <scope>CHARACTERIZATION</scope>
    <source>
        <strain>Wistar</strain>
        <tissue>Brain</tissue>
        <tissue>Pituitary</tissue>
    </source>
</reference>
<gene>
    <name type="primary">Cdh22</name>
</gene>
<evidence type="ECO:0000250" key="1"/>
<evidence type="ECO:0000255" key="2"/>
<evidence type="ECO:0000255" key="3">
    <source>
        <dbReference type="PROSITE-ProRule" id="PRU00043"/>
    </source>
</evidence>
<evidence type="ECO:0000256" key="4">
    <source>
        <dbReference type="SAM" id="MobiDB-lite"/>
    </source>
</evidence>
<evidence type="ECO:0000303" key="5">
    <source>
    </source>
</evidence>
<proteinExistence type="evidence at protein level"/>
<accession>Q63315</accession>
<accession>Q63561</accession>